<evidence type="ECO:0000255" key="1">
    <source>
        <dbReference type="HAMAP-Rule" id="MF_00123"/>
    </source>
</evidence>
<comment type="catalytic activity">
    <reaction evidence="1">
        <text>tRNA(Arg) + L-arginine + ATP = L-arginyl-tRNA(Arg) + AMP + diphosphate</text>
        <dbReference type="Rhea" id="RHEA:20301"/>
        <dbReference type="Rhea" id="RHEA-COMP:9658"/>
        <dbReference type="Rhea" id="RHEA-COMP:9673"/>
        <dbReference type="ChEBI" id="CHEBI:30616"/>
        <dbReference type="ChEBI" id="CHEBI:32682"/>
        <dbReference type="ChEBI" id="CHEBI:33019"/>
        <dbReference type="ChEBI" id="CHEBI:78442"/>
        <dbReference type="ChEBI" id="CHEBI:78513"/>
        <dbReference type="ChEBI" id="CHEBI:456215"/>
        <dbReference type="EC" id="6.1.1.19"/>
    </reaction>
</comment>
<comment type="subunit">
    <text evidence="1">Monomer.</text>
</comment>
<comment type="subcellular location">
    <subcellularLocation>
        <location evidence="1">Cytoplasm</location>
    </subcellularLocation>
</comment>
<comment type="similarity">
    <text evidence="1">Belongs to the class-I aminoacyl-tRNA synthetase family.</text>
</comment>
<feature type="chain" id="PRO_0000151527" description="Arginine--tRNA ligase">
    <location>
        <begin position="1"/>
        <end position="556"/>
    </location>
</feature>
<feature type="short sequence motif" description="'HIGH' region">
    <location>
        <begin position="132"/>
        <end position="142"/>
    </location>
</feature>
<dbReference type="EC" id="6.1.1.19" evidence="1"/>
<dbReference type="EMBL" id="AE016877">
    <property type="protein sequence ID" value="AAP12226.1"/>
    <property type="molecule type" value="Genomic_DNA"/>
</dbReference>
<dbReference type="RefSeq" id="NP_835025.1">
    <property type="nucleotide sequence ID" value="NC_004722.1"/>
</dbReference>
<dbReference type="RefSeq" id="WP_001086456.1">
    <property type="nucleotide sequence ID" value="NZ_CP138336.1"/>
</dbReference>
<dbReference type="SMR" id="Q814Q8"/>
<dbReference type="STRING" id="226900.BC_5364"/>
<dbReference type="MetOSite" id="Q814Q8"/>
<dbReference type="GeneID" id="93005759"/>
<dbReference type="KEGG" id="bce:BC5364"/>
<dbReference type="PATRIC" id="fig|226900.8.peg.5540"/>
<dbReference type="HOGENOM" id="CLU_006406_0_1_9"/>
<dbReference type="OrthoDB" id="9805987at2"/>
<dbReference type="Proteomes" id="UP000001417">
    <property type="component" value="Chromosome"/>
</dbReference>
<dbReference type="GO" id="GO:0005737">
    <property type="term" value="C:cytoplasm"/>
    <property type="evidence" value="ECO:0007669"/>
    <property type="project" value="UniProtKB-SubCell"/>
</dbReference>
<dbReference type="GO" id="GO:0004814">
    <property type="term" value="F:arginine-tRNA ligase activity"/>
    <property type="evidence" value="ECO:0000318"/>
    <property type="project" value="GO_Central"/>
</dbReference>
<dbReference type="GO" id="GO:0005524">
    <property type="term" value="F:ATP binding"/>
    <property type="evidence" value="ECO:0007669"/>
    <property type="project" value="UniProtKB-UniRule"/>
</dbReference>
<dbReference type="GO" id="GO:0006420">
    <property type="term" value="P:arginyl-tRNA aminoacylation"/>
    <property type="evidence" value="ECO:0000318"/>
    <property type="project" value="GO_Central"/>
</dbReference>
<dbReference type="CDD" id="cd07956">
    <property type="entry name" value="Anticodon_Ia_Arg"/>
    <property type="match status" value="1"/>
</dbReference>
<dbReference type="CDD" id="cd00671">
    <property type="entry name" value="ArgRS_core"/>
    <property type="match status" value="1"/>
</dbReference>
<dbReference type="FunFam" id="1.10.730.10:FF:000008">
    <property type="entry name" value="Arginine--tRNA ligase"/>
    <property type="match status" value="1"/>
</dbReference>
<dbReference type="FunFam" id="3.30.1360.70:FF:000003">
    <property type="entry name" value="Arginine--tRNA ligase"/>
    <property type="match status" value="1"/>
</dbReference>
<dbReference type="FunFam" id="3.40.50.620:FF:000062">
    <property type="entry name" value="Arginine--tRNA ligase"/>
    <property type="match status" value="1"/>
</dbReference>
<dbReference type="Gene3D" id="3.30.1360.70">
    <property type="entry name" value="Arginyl tRNA synthetase N-terminal domain"/>
    <property type="match status" value="1"/>
</dbReference>
<dbReference type="Gene3D" id="3.40.50.620">
    <property type="entry name" value="HUPs"/>
    <property type="match status" value="1"/>
</dbReference>
<dbReference type="Gene3D" id="1.10.730.10">
    <property type="entry name" value="Isoleucyl-tRNA Synthetase, Domain 1"/>
    <property type="match status" value="1"/>
</dbReference>
<dbReference type="HAMAP" id="MF_00123">
    <property type="entry name" value="Arg_tRNA_synth"/>
    <property type="match status" value="1"/>
</dbReference>
<dbReference type="InterPro" id="IPR001412">
    <property type="entry name" value="aa-tRNA-synth_I_CS"/>
</dbReference>
<dbReference type="InterPro" id="IPR001278">
    <property type="entry name" value="Arg-tRNA-ligase"/>
</dbReference>
<dbReference type="InterPro" id="IPR005148">
    <property type="entry name" value="Arg-tRNA-synth_N"/>
</dbReference>
<dbReference type="InterPro" id="IPR036695">
    <property type="entry name" value="Arg-tRNA-synth_N_sf"/>
</dbReference>
<dbReference type="InterPro" id="IPR035684">
    <property type="entry name" value="ArgRS_core"/>
</dbReference>
<dbReference type="InterPro" id="IPR008909">
    <property type="entry name" value="DALR_anticod-bd"/>
</dbReference>
<dbReference type="InterPro" id="IPR014729">
    <property type="entry name" value="Rossmann-like_a/b/a_fold"/>
</dbReference>
<dbReference type="InterPro" id="IPR009080">
    <property type="entry name" value="tRNAsynth_Ia_anticodon-bd"/>
</dbReference>
<dbReference type="NCBIfam" id="TIGR00456">
    <property type="entry name" value="argS"/>
    <property type="match status" value="1"/>
</dbReference>
<dbReference type="PANTHER" id="PTHR11956:SF5">
    <property type="entry name" value="ARGININE--TRNA LIGASE, CYTOPLASMIC"/>
    <property type="match status" value="1"/>
</dbReference>
<dbReference type="PANTHER" id="PTHR11956">
    <property type="entry name" value="ARGINYL-TRNA SYNTHETASE"/>
    <property type="match status" value="1"/>
</dbReference>
<dbReference type="Pfam" id="PF03485">
    <property type="entry name" value="Arg_tRNA_synt_N"/>
    <property type="match status" value="1"/>
</dbReference>
<dbReference type="Pfam" id="PF05746">
    <property type="entry name" value="DALR_1"/>
    <property type="match status" value="1"/>
</dbReference>
<dbReference type="Pfam" id="PF00750">
    <property type="entry name" value="tRNA-synt_1d"/>
    <property type="match status" value="1"/>
</dbReference>
<dbReference type="PRINTS" id="PR01038">
    <property type="entry name" value="TRNASYNTHARG"/>
</dbReference>
<dbReference type="SMART" id="SM01016">
    <property type="entry name" value="Arg_tRNA_synt_N"/>
    <property type="match status" value="1"/>
</dbReference>
<dbReference type="SMART" id="SM00836">
    <property type="entry name" value="DALR_1"/>
    <property type="match status" value="1"/>
</dbReference>
<dbReference type="SUPFAM" id="SSF47323">
    <property type="entry name" value="Anticodon-binding domain of a subclass of class I aminoacyl-tRNA synthetases"/>
    <property type="match status" value="1"/>
</dbReference>
<dbReference type="SUPFAM" id="SSF55190">
    <property type="entry name" value="Arginyl-tRNA synthetase (ArgRS), N-terminal 'additional' domain"/>
    <property type="match status" value="1"/>
</dbReference>
<dbReference type="SUPFAM" id="SSF52374">
    <property type="entry name" value="Nucleotidylyl transferase"/>
    <property type="match status" value="1"/>
</dbReference>
<dbReference type="PROSITE" id="PS00178">
    <property type="entry name" value="AA_TRNA_LIGASE_I"/>
    <property type="match status" value="1"/>
</dbReference>
<accession>Q814Q8</accession>
<proteinExistence type="inferred from homology"/>
<reference key="1">
    <citation type="journal article" date="2003" name="Nature">
        <title>Genome sequence of Bacillus cereus and comparative analysis with Bacillus anthracis.</title>
        <authorList>
            <person name="Ivanova N."/>
            <person name="Sorokin A."/>
            <person name="Anderson I."/>
            <person name="Galleron N."/>
            <person name="Candelon B."/>
            <person name="Kapatral V."/>
            <person name="Bhattacharyya A."/>
            <person name="Reznik G."/>
            <person name="Mikhailova N."/>
            <person name="Lapidus A."/>
            <person name="Chu L."/>
            <person name="Mazur M."/>
            <person name="Goltsman E."/>
            <person name="Larsen N."/>
            <person name="D'Souza M."/>
            <person name="Walunas T."/>
            <person name="Grechkin Y."/>
            <person name="Pusch G."/>
            <person name="Haselkorn R."/>
            <person name="Fonstein M."/>
            <person name="Ehrlich S.D."/>
            <person name="Overbeek R."/>
            <person name="Kyrpides N.C."/>
        </authorList>
    </citation>
    <scope>NUCLEOTIDE SEQUENCE [LARGE SCALE GENOMIC DNA]</scope>
    <source>
        <strain>ATCC 14579 / DSM 31 / CCUG 7414 / JCM 2152 / NBRC 15305 / NCIMB 9373 / NCTC 2599 / NRRL B-3711</strain>
    </source>
</reference>
<gene>
    <name evidence="1" type="primary">argS</name>
    <name type="ordered locus">BC_5364</name>
</gene>
<protein>
    <recommendedName>
        <fullName evidence="1">Arginine--tRNA ligase</fullName>
        <ecNumber evidence="1">6.1.1.19</ecNumber>
    </recommendedName>
    <alternativeName>
        <fullName evidence="1">Arginyl-tRNA synthetase</fullName>
        <shortName evidence="1">ArgRS</shortName>
    </alternativeName>
</protein>
<sequence>MNSLEQVKGLIKEEIQAAVLKAELATEEQIPNVVLESPKDKTNGDFSTNMAMQLARVAKKAPRMIAEELVANFDKAKASIEKIEIAGPGFINFYMDNSYLTDLIPTIVNAGEAYGETNTGKGEKVQVEFVSANPTGDLHLGHARGAAVGDTLCNLLAKAGYDVSREYYINDAGNQIHNLALSVEARYMQALGLEKEMPEDGYHGADIIGIGKRLAEEFGDRYAKADEKESYEFYREYGLKYELAKLQKDLESFRVKFDVWFSETSLYKNGKIDQALAVLKERDEIFEEDGATWFRSMTYGDDKNRVLIKNDGSYTYLTPDIAYHRDKLERGFDKLINIWGADHHGYIPRMKAAIQALGYDKETLEVEIIQMVQLYQNGEKMKMSKRTGKAVTLRELMEEVGVDAMRYFFAMRSGDSHLDFDMDLAVSKSNENPVYYAQYAHARVCSILRQGEELGLATGGDVNYKLVTSEKEVELLKKLGEFPAVVADAAQKRLPHRITNYAFELAATLHSFYNAEKVLNQDNLELSKARYELMKAVRTTLQNALAIVGVSAPEKM</sequence>
<keyword id="KW-0030">Aminoacyl-tRNA synthetase</keyword>
<keyword id="KW-0067">ATP-binding</keyword>
<keyword id="KW-0963">Cytoplasm</keyword>
<keyword id="KW-0436">Ligase</keyword>
<keyword id="KW-0547">Nucleotide-binding</keyword>
<keyword id="KW-0648">Protein biosynthesis</keyword>
<keyword id="KW-1185">Reference proteome</keyword>
<organism>
    <name type="scientific">Bacillus cereus (strain ATCC 14579 / DSM 31 / CCUG 7414 / JCM 2152 / NBRC 15305 / NCIMB 9373 / NCTC 2599 / NRRL B-3711)</name>
    <dbReference type="NCBI Taxonomy" id="226900"/>
    <lineage>
        <taxon>Bacteria</taxon>
        <taxon>Bacillati</taxon>
        <taxon>Bacillota</taxon>
        <taxon>Bacilli</taxon>
        <taxon>Bacillales</taxon>
        <taxon>Bacillaceae</taxon>
        <taxon>Bacillus</taxon>
        <taxon>Bacillus cereus group</taxon>
    </lineage>
</organism>
<name>SYR_BACCR</name>